<feature type="chain" id="PRO_1000092131" description="Sulfate adenylyltransferase subunit 1">
    <location>
        <begin position="1"/>
        <end position="471"/>
    </location>
</feature>
<feature type="domain" description="tr-type G">
    <location>
        <begin position="22"/>
        <end position="239"/>
    </location>
</feature>
<feature type="region of interest" description="G1" evidence="1">
    <location>
        <begin position="31"/>
        <end position="38"/>
    </location>
</feature>
<feature type="region of interest" description="G2" evidence="1">
    <location>
        <begin position="89"/>
        <end position="93"/>
    </location>
</feature>
<feature type="region of interest" description="G3" evidence="1">
    <location>
        <begin position="110"/>
        <end position="113"/>
    </location>
</feature>
<feature type="region of interest" description="G4" evidence="1">
    <location>
        <begin position="165"/>
        <end position="168"/>
    </location>
</feature>
<feature type="region of interest" description="G5" evidence="1">
    <location>
        <begin position="202"/>
        <end position="204"/>
    </location>
</feature>
<feature type="binding site" evidence="2">
    <location>
        <begin position="31"/>
        <end position="38"/>
    </location>
    <ligand>
        <name>GTP</name>
        <dbReference type="ChEBI" id="CHEBI:37565"/>
    </ligand>
</feature>
<feature type="binding site" evidence="2">
    <location>
        <begin position="110"/>
        <end position="114"/>
    </location>
    <ligand>
        <name>GTP</name>
        <dbReference type="ChEBI" id="CHEBI:37565"/>
    </ligand>
</feature>
<feature type="binding site" evidence="2">
    <location>
        <begin position="165"/>
        <end position="168"/>
    </location>
    <ligand>
        <name>GTP</name>
        <dbReference type="ChEBI" id="CHEBI:37565"/>
    </ligand>
</feature>
<accession>B4RTW4</accession>
<accession>F2G5R6</accession>
<sequence length="471" mass="52910">MNNENELLRQDILSYLEQHEKKDMLRFLTCGSVDDGKSTLIGRLLHDSKMIYEDQLAAITKDSKKVGTTGEKVDLALLVDGLQSEREQGITIDVAYRYFSTDKRKFIIADTPGHEQYTRNMVTGASTCDLAIILVDARGGVKVQTKRHSFLVSLLGIKHVIVAINKMDLMDYSEEVYKQIQEDYLKFAEQLDIPDIQFVPISALEGDNVVGKSEKTPWFDGTPLMEMLENIEIGEDDNLEDFRFPVQYVNRPNLDFRGFAGTVVSGQVAPGDEVTALPSGKKSKVKQVVTFEGDQERAYVPQAVTLTLEDEIDISRGDMIVKSDNLPLLNTQFKTHLVWMSEEPLMPNKQYLFKFATKSTPGVVAHIDNQIDVNTLEEADAMHLNLNEIGVVDVKFTQPVACDPYKRNRPTGSFIVIDRLTNGTVGAGMIIDEIAGDAQHTSPNFSEFELEFNALVRKHFPHWNSVDISKL</sequence>
<reference key="1">
    <citation type="journal article" date="2008" name="ISME J.">
        <title>Comparative genomics of two ecotypes of the marine planktonic copiotroph Alteromonas macleodii suggests alternative lifestyles associated with different kinds of particulate organic matter.</title>
        <authorList>
            <person name="Ivars-Martinez E."/>
            <person name="Martin-Cuadrado A.-B."/>
            <person name="D'Auria G."/>
            <person name="Mira A."/>
            <person name="Ferriera S."/>
            <person name="Johnson J."/>
            <person name="Friedman R."/>
            <person name="Rodriguez-Valera F."/>
        </authorList>
    </citation>
    <scope>NUCLEOTIDE SEQUENCE [LARGE SCALE GENOMIC DNA]</scope>
    <source>
        <strain>DSM 17117 / CIP 110805 / LMG 28347 / Deep ecotype</strain>
    </source>
</reference>
<organism>
    <name type="scientific">Alteromonas mediterranea (strain DSM 17117 / CIP 110805 / LMG 28347 / Deep ecotype)</name>
    <dbReference type="NCBI Taxonomy" id="1774373"/>
    <lineage>
        <taxon>Bacteria</taxon>
        <taxon>Pseudomonadati</taxon>
        <taxon>Pseudomonadota</taxon>
        <taxon>Gammaproteobacteria</taxon>
        <taxon>Alteromonadales</taxon>
        <taxon>Alteromonadaceae</taxon>
        <taxon>Alteromonas/Salinimonas group</taxon>
        <taxon>Alteromonas</taxon>
    </lineage>
</organism>
<keyword id="KW-0067">ATP-binding</keyword>
<keyword id="KW-0342">GTP-binding</keyword>
<keyword id="KW-0547">Nucleotide-binding</keyword>
<keyword id="KW-0548">Nucleotidyltransferase</keyword>
<keyword id="KW-0808">Transferase</keyword>
<dbReference type="EC" id="2.7.7.4" evidence="2"/>
<dbReference type="EMBL" id="CP001103">
    <property type="protein sequence ID" value="AEA97487.1"/>
    <property type="molecule type" value="Genomic_DNA"/>
</dbReference>
<dbReference type="RefSeq" id="WP_012517829.1">
    <property type="nucleotide sequence ID" value="NC_011138.3"/>
</dbReference>
<dbReference type="SMR" id="B4RTW4"/>
<dbReference type="KEGG" id="amc:MADE_1006725"/>
<dbReference type="HOGENOM" id="CLU_007265_5_2_6"/>
<dbReference type="UniPathway" id="UPA00140">
    <property type="reaction ID" value="UER00204"/>
</dbReference>
<dbReference type="Proteomes" id="UP000001870">
    <property type="component" value="Chromosome"/>
</dbReference>
<dbReference type="GO" id="GO:0005524">
    <property type="term" value="F:ATP binding"/>
    <property type="evidence" value="ECO:0007669"/>
    <property type="project" value="UniProtKB-KW"/>
</dbReference>
<dbReference type="GO" id="GO:0005525">
    <property type="term" value="F:GTP binding"/>
    <property type="evidence" value="ECO:0007669"/>
    <property type="project" value="UniProtKB-UniRule"/>
</dbReference>
<dbReference type="GO" id="GO:0003924">
    <property type="term" value="F:GTPase activity"/>
    <property type="evidence" value="ECO:0007669"/>
    <property type="project" value="InterPro"/>
</dbReference>
<dbReference type="GO" id="GO:0004781">
    <property type="term" value="F:sulfate adenylyltransferase (ATP) activity"/>
    <property type="evidence" value="ECO:0007669"/>
    <property type="project" value="UniProtKB-UniRule"/>
</dbReference>
<dbReference type="GO" id="GO:0070814">
    <property type="term" value="P:hydrogen sulfide biosynthetic process"/>
    <property type="evidence" value="ECO:0007669"/>
    <property type="project" value="UniProtKB-UniRule"/>
</dbReference>
<dbReference type="GO" id="GO:0000103">
    <property type="term" value="P:sulfate assimilation"/>
    <property type="evidence" value="ECO:0007669"/>
    <property type="project" value="UniProtKB-UniRule"/>
</dbReference>
<dbReference type="CDD" id="cd04166">
    <property type="entry name" value="CysN_ATPS"/>
    <property type="match status" value="1"/>
</dbReference>
<dbReference type="CDD" id="cd03695">
    <property type="entry name" value="CysN_NodQ_II"/>
    <property type="match status" value="1"/>
</dbReference>
<dbReference type="CDD" id="cd04095">
    <property type="entry name" value="CysN_NoDQ_III"/>
    <property type="match status" value="1"/>
</dbReference>
<dbReference type="FunFam" id="2.40.30.10:FF:000027">
    <property type="entry name" value="Sulfate adenylyltransferase subunit 1"/>
    <property type="match status" value="1"/>
</dbReference>
<dbReference type="FunFam" id="3.40.50.300:FF:000119">
    <property type="entry name" value="Sulfate adenylyltransferase subunit 1"/>
    <property type="match status" value="1"/>
</dbReference>
<dbReference type="Gene3D" id="3.40.50.300">
    <property type="entry name" value="P-loop containing nucleotide triphosphate hydrolases"/>
    <property type="match status" value="1"/>
</dbReference>
<dbReference type="Gene3D" id="2.40.30.10">
    <property type="entry name" value="Translation factors"/>
    <property type="match status" value="2"/>
</dbReference>
<dbReference type="HAMAP" id="MF_00062">
    <property type="entry name" value="Sulf_adenylyltr_sub1"/>
    <property type="match status" value="1"/>
</dbReference>
<dbReference type="InterPro" id="IPR041757">
    <property type="entry name" value="CysN_GTP-bd"/>
</dbReference>
<dbReference type="InterPro" id="IPR044138">
    <property type="entry name" value="CysN_II"/>
</dbReference>
<dbReference type="InterPro" id="IPR044139">
    <property type="entry name" value="CysN_NoDQ_III"/>
</dbReference>
<dbReference type="InterPro" id="IPR031157">
    <property type="entry name" value="G_TR_CS"/>
</dbReference>
<dbReference type="InterPro" id="IPR054696">
    <property type="entry name" value="GTP-eEF1A_C"/>
</dbReference>
<dbReference type="InterPro" id="IPR027417">
    <property type="entry name" value="P-loop_NTPase"/>
</dbReference>
<dbReference type="InterPro" id="IPR005225">
    <property type="entry name" value="Small_GTP-bd"/>
</dbReference>
<dbReference type="InterPro" id="IPR011779">
    <property type="entry name" value="SO4_adenylTrfase_lsu"/>
</dbReference>
<dbReference type="InterPro" id="IPR000795">
    <property type="entry name" value="T_Tr_GTP-bd_dom"/>
</dbReference>
<dbReference type="InterPro" id="IPR050100">
    <property type="entry name" value="TRAFAC_GTPase_members"/>
</dbReference>
<dbReference type="InterPro" id="IPR009000">
    <property type="entry name" value="Transl_B-barrel_sf"/>
</dbReference>
<dbReference type="InterPro" id="IPR009001">
    <property type="entry name" value="Transl_elong_EF1A/Init_IF2_C"/>
</dbReference>
<dbReference type="NCBIfam" id="TIGR02034">
    <property type="entry name" value="CysN"/>
    <property type="match status" value="1"/>
</dbReference>
<dbReference type="NCBIfam" id="NF003478">
    <property type="entry name" value="PRK05124.1"/>
    <property type="match status" value="1"/>
</dbReference>
<dbReference type="NCBIfam" id="NF004035">
    <property type="entry name" value="PRK05506.1"/>
    <property type="match status" value="1"/>
</dbReference>
<dbReference type="NCBIfam" id="TIGR00231">
    <property type="entry name" value="small_GTP"/>
    <property type="match status" value="1"/>
</dbReference>
<dbReference type="PANTHER" id="PTHR23115">
    <property type="entry name" value="TRANSLATION FACTOR"/>
    <property type="match status" value="1"/>
</dbReference>
<dbReference type="Pfam" id="PF22594">
    <property type="entry name" value="GTP-eEF1A_C"/>
    <property type="match status" value="1"/>
</dbReference>
<dbReference type="Pfam" id="PF00009">
    <property type="entry name" value="GTP_EFTU"/>
    <property type="match status" value="1"/>
</dbReference>
<dbReference type="PRINTS" id="PR00315">
    <property type="entry name" value="ELONGATNFCT"/>
</dbReference>
<dbReference type="SUPFAM" id="SSF50465">
    <property type="entry name" value="EF-Tu/eEF-1alpha/eIF2-gamma C-terminal domain"/>
    <property type="match status" value="1"/>
</dbReference>
<dbReference type="SUPFAM" id="SSF52540">
    <property type="entry name" value="P-loop containing nucleoside triphosphate hydrolases"/>
    <property type="match status" value="1"/>
</dbReference>
<dbReference type="SUPFAM" id="SSF50447">
    <property type="entry name" value="Translation proteins"/>
    <property type="match status" value="1"/>
</dbReference>
<dbReference type="PROSITE" id="PS00301">
    <property type="entry name" value="G_TR_1"/>
    <property type="match status" value="1"/>
</dbReference>
<dbReference type="PROSITE" id="PS51722">
    <property type="entry name" value="G_TR_2"/>
    <property type="match status" value="1"/>
</dbReference>
<comment type="function">
    <text evidence="2">With CysD forms the ATP sulfurylase (ATPS) that catalyzes the adenylation of sulfate producing adenosine 5'-phosphosulfate (APS) and diphosphate, the first enzymatic step in sulfur assimilation pathway. APS synthesis involves the formation of a high-energy phosphoric-sulfuric acid anhydride bond driven by GTP hydrolysis by CysN coupled to ATP hydrolysis by CysD.</text>
</comment>
<comment type="catalytic activity">
    <reaction evidence="2">
        <text>sulfate + ATP + H(+) = adenosine 5'-phosphosulfate + diphosphate</text>
        <dbReference type="Rhea" id="RHEA:18133"/>
        <dbReference type="ChEBI" id="CHEBI:15378"/>
        <dbReference type="ChEBI" id="CHEBI:16189"/>
        <dbReference type="ChEBI" id="CHEBI:30616"/>
        <dbReference type="ChEBI" id="CHEBI:33019"/>
        <dbReference type="ChEBI" id="CHEBI:58243"/>
        <dbReference type="EC" id="2.7.7.4"/>
    </reaction>
</comment>
<comment type="pathway">
    <text evidence="2">Sulfur metabolism; hydrogen sulfide biosynthesis; sulfite from sulfate: step 1/3.</text>
</comment>
<comment type="subunit">
    <text evidence="2">Heterodimer composed of CysD, the smaller subunit, and CysN.</text>
</comment>
<comment type="similarity">
    <text evidence="2">Belongs to the TRAFAC class translation factor GTPase superfamily. Classic translation factor GTPase family. CysN/NodQ subfamily.</text>
</comment>
<gene>
    <name evidence="2" type="primary">cysN</name>
    <name type="ordered locus">MADE_1006725</name>
</gene>
<protein>
    <recommendedName>
        <fullName evidence="2">Sulfate adenylyltransferase subunit 1</fullName>
        <ecNumber evidence="2">2.7.7.4</ecNumber>
    </recommendedName>
    <alternativeName>
        <fullName evidence="2">ATP-sulfurylase large subunit</fullName>
    </alternativeName>
    <alternativeName>
        <fullName evidence="2">Sulfate adenylate transferase</fullName>
        <shortName evidence="2">SAT</shortName>
    </alternativeName>
</protein>
<name>CYSN_ALTMD</name>
<proteinExistence type="inferred from homology"/>
<evidence type="ECO:0000250" key="1"/>
<evidence type="ECO:0000255" key="2">
    <source>
        <dbReference type="HAMAP-Rule" id="MF_00062"/>
    </source>
</evidence>